<reference key="1">
    <citation type="journal article" date="2008" name="J. Bacteriol.">
        <title>The pangenome structure of Escherichia coli: comparative genomic analysis of E. coli commensal and pathogenic isolates.</title>
        <authorList>
            <person name="Rasko D.A."/>
            <person name="Rosovitz M.J."/>
            <person name="Myers G.S.A."/>
            <person name="Mongodin E.F."/>
            <person name="Fricke W.F."/>
            <person name="Gajer P."/>
            <person name="Crabtree J."/>
            <person name="Sebaihia M."/>
            <person name="Thomson N.R."/>
            <person name="Chaudhuri R."/>
            <person name="Henderson I.R."/>
            <person name="Sperandio V."/>
            <person name="Ravel J."/>
        </authorList>
    </citation>
    <scope>NUCLEOTIDE SEQUENCE [LARGE SCALE GENOMIC DNA]</scope>
    <source>
        <strain>HS</strain>
    </source>
</reference>
<accession>A8A7N3</accession>
<sequence length="112" mass="12331">MLDEKSSNTASVVVLCTAPDEATAQDLAAKVLAEKLAACATLIPGATSLYYWEGKLEQEYEVQMILKTTVSHQQALLECLKSHHPYQTPELLVLPVTHGDTDYLSWLNASLR</sequence>
<name>CUTA_ECOHS</name>
<feature type="chain" id="PRO_1000065598" description="Divalent-cation tolerance protein CutA">
    <location>
        <begin position="1"/>
        <end position="112"/>
    </location>
</feature>
<feature type="binding site" evidence="1">
    <location>
        <position position="16"/>
    </location>
    <ligand>
        <name>Cu cation</name>
        <dbReference type="ChEBI" id="CHEBI:23378"/>
    </ligand>
</feature>
<feature type="binding site" evidence="1">
    <location>
        <position position="83"/>
    </location>
    <ligand>
        <name>Cu cation</name>
        <dbReference type="ChEBI" id="CHEBI:23378"/>
    </ligand>
</feature>
<feature type="binding site" evidence="1">
    <location>
        <position position="84"/>
    </location>
    <ligand>
        <name>Cu cation</name>
        <dbReference type="ChEBI" id="CHEBI:23378"/>
    </ligand>
</feature>
<proteinExistence type="inferred from homology"/>
<organism>
    <name type="scientific">Escherichia coli O9:H4 (strain HS)</name>
    <dbReference type="NCBI Taxonomy" id="331112"/>
    <lineage>
        <taxon>Bacteria</taxon>
        <taxon>Pseudomonadati</taxon>
        <taxon>Pseudomonadota</taxon>
        <taxon>Gammaproteobacteria</taxon>
        <taxon>Enterobacterales</taxon>
        <taxon>Enterobacteriaceae</taxon>
        <taxon>Escherichia</taxon>
    </lineage>
</organism>
<gene>
    <name evidence="1" type="primary">cutA</name>
    <name type="ordered locus">EcHS_A4378</name>
</gene>
<protein>
    <recommendedName>
        <fullName evidence="1">Divalent-cation tolerance protein CutA</fullName>
    </recommendedName>
</protein>
<comment type="function">
    <text evidence="1">Involved in resistance toward heavy metals.</text>
</comment>
<comment type="cofactor">
    <cofactor evidence="1">
        <name>Cu cation</name>
        <dbReference type="ChEBI" id="CHEBI:23378"/>
    </cofactor>
    <text evidence="1">Binds 1 copper ion per subunit.</text>
</comment>
<comment type="subunit">
    <text evidence="1">Homotrimer.</text>
</comment>
<comment type="subcellular location">
    <subcellularLocation>
        <location evidence="1">Cytoplasm</location>
    </subcellularLocation>
</comment>
<comment type="similarity">
    <text evidence="1">Belongs to the CutA family.</text>
</comment>
<evidence type="ECO:0000255" key="1">
    <source>
        <dbReference type="HAMAP-Rule" id="MF_01160"/>
    </source>
</evidence>
<keyword id="KW-0186">Copper</keyword>
<keyword id="KW-0963">Cytoplasm</keyword>
<keyword id="KW-0479">Metal-binding</keyword>
<dbReference type="EMBL" id="CP000802">
    <property type="protein sequence ID" value="ABV08537.1"/>
    <property type="molecule type" value="Genomic_DNA"/>
</dbReference>
<dbReference type="RefSeq" id="WP_000883400.1">
    <property type="nucleotide sequence ID" value="NC_009800.1"/>
</dbReference>
<dbReference type="BMRB" id="A8A7N3"/>
<dbReference type="SMR" id="A8A7N3"/>
<dbReference type="GeneID" id="93777687"/>
<dbReference type="KEGG" id="ecx:EcHS_A4378"/>
<dbReference type="HOGENOM" id="CLU_098807_3_0_6"/>
<dbReference type="GO" id="GO:0005737">
    <property type="term" value="C:cytoplasm"/>
    <property type="evidence" value="ECO:0007669"/>
    <property type="project" value="UniProtKB-SubCell"/>
</dbReference>
<dbReference type="GO" id="GO:0005507">
    <property type="term" value="F:copper ion binding"/>
    <property type="evidence" value="ECO:0007669"/>
    <property type="project" value="UniProtKB-UniRule"/>
</dbReference>
<dbReference type="GO" id="GO:0010038">
    <property type="term" value="P:response to metal ion"/>
    <property type="evidence" value="ECO:0007669"/>
    <property type="project" value="InterPro"/>
</dbReference>
<dbReference type="FunFam" id="3.30.70.120:FF:000004">
    <property type="entry name" value="Divalent-cation tolerance protein CutA"/>
    <property type="match status" value="1"/>
</dbReference>
<dbReference type="Gene3D" id="3.30.70.120">
    <property type="match status" value="1"/>
</dbReference>
<dbReference type="HAMAP" id="MF_01160">
    <property type="entry name" value="CutA"/>
    <property type="match status" value="1"/>
</dbReference>
<dbReference type="InterPro" id="IPR023700">
    <property type="entry name" value="CutA_Enterobact"/>
</dbReference>
<dbReference type="InterPro" id="IPR004323">
    <property type="entry name" value="Ion_tolerance_CutA"/>
</dbReference>
<dbReference type="InterPro" id="IPR011322">
    <property type="entry name" value="N-reg_PII-like_a/b"/>
</dbReference>
<dbReference type="InterPro" id="IPR015867">
    <property type="entry name" value="N-reg_PII/ATP_PRibTrfase_C"/>
</dbReference>
<dbReference type="NCBIfam" id="NF007930">
    <property type="entry name" value="PRK10645.1"/>
    <property type="match status" value="1"/>
</dbReference>
<dbReference type="PANTHER" id="PTHR23419">
    <property type="entry name" value="DIVALENT CATION TOLERANCE CUTA-RELATED"/>
    <property type="match status" value="1"/>
</dbReference>
<dbReference type="PANTHER" id="PTHR23419:SF8">
    <property type="entry name" value="FI09726P"/>
    <property type="match status" value="1"/>
</dbReference>
<dbReference type="Pfam" id="PF03091">
    <property type="entry name" value="CutA1"/>
    <property type="match status" value="1"/>
</dbReference>
<dbReference type="SUPFAM" id="SSF54913">
    <property type="entry name" value="GlnB-like"/>
    <property type="match status" value="1"/>
</dbReference>